<organism>
    <name type="scientific">Frog virus 3 (isolate Goorha)</name>
    <name type="common">FV-3</name>
    <dbReference type="NCBI Taxonomy" id="654924"/>
    <lineage>
        <taxon>Viruses</taxon>
        <taxon>Varidnaviria</taxon>
        <taxon>Bamfordvirae</taxon>
        <taxon>Nucleocytoviricota</taxon>
        <taxon>Megaviricetes</taxon>
        <taxon>Pimascovirales</taxon>
        <taxon>Iridoviridae</taxon>
        <taxon>Alphairidovirinae</taxon>
        <taxon>Ranavirus</taxon>
        <taxon>Frog virus 3</taxon>
    </lineage>
</organism>
<organismHost>
    <name type="scientific">Dryophytes versicolor</name>
    <name type="common">chameleon treefrog</name>
    <dbReference type="NCBI Taxonomy" id="30343"/>
</organismHost>
<organismHost>
    <name type="scientific">Lithobates pipiens</name>
    <name type="common">Northern leopard frog</name>
    <name type="synonym">Rana pipiens</name>
    <dbReference type="NCBI Taxonomy" id="8404"/>
</organismHost>
<organismHost>
    <name type="scientific">Lithobates sylvaticus</name>
    <name type="common">Wood frog</name>
    <name type="synonym">Rana sylvatica</name>
    <dbReference type="NCBI Taxonomy" id="45438"/>
</organismHost>
<organismHost>
    <name type="scientific">Notophthalmus viridescens</name>
    <name type="common">Eastern newt</name>
    <name type="synonym">Triturus viridescens</name>
    <dbReference type="NCBI Taxonomy" id="8316"/>
</organismHost>
<feature type="chain" id="PRO_0000410588" description="Putative deoxynucleoside kinase">
    <location>
        <begin position="1"/>
        <end position="195"/>
    </location>
</feature>
<name>DNK_FRG3G</name>
<dbReference type="EC" id="2.7.1.-"/>
<dbReference type="EMBL" id="AY548484">
    <property type="protein sequence ID" value="AAT09745.1"/>
    <property type="molecule type" value="Genomic_DNA"/>
</dbReference>
<dbReference type="EMBL" id="AY837779">
    <property type="protein sequence ID" value="AAX39816.1"/>
    <property type="molecule type" value="Genomic_DNA"/>
</dbReference>
<dbReference type="RefSeq" id="YP_031664.1">
    <property type="nucleotide sequence ID" value="NC_005946.1"/>
</dbReference>
<dbReference type="SMR" id="Q6GZP0"/>
<dbReference type="KEGG" id="vg:2947804"/>
<dbReference type="Proteomes" id="UP000008770">
    <property type="component" value="Segment"/>
</dbReference>
<dbReference type="GO" id="GO:0005524">
    <property type="term" value="F:ATP binding"/>
    <property type="evidence" value="ECO:0007669"/>
    <property type="project" value="InterPro"/>
</dbReference>
<dbReference type="GO" id="GO:0019136">
    <property type="term" value="F:deoxynucleoside kinase activity"/>
    <property type="evidence" value="ECO:0007669"/>
    <property type="project" value="InterPro"/>
</dbReference>
<dbReference type="CDD" id="cd01673">
    <property type="entry name" value="dNK"/>
    <property type="match status" value="1"/>
</dbReference>
<dbReference type="Gene3D" id="3.40.50.300">
    <property type="entry name" value="P-loop containing nucleotide triphosphate hydrolases"/>
    <property type="match status" value="1"/>
</dbReference>
<dbReference type="InterPro" id="IPR002624">
    <property type="entry name" value="DCK/DGK"/>
</dbReference>
<dbReference type="InterPro" id="IPR050566">
    <property type="entry name" value="Deoxyribonucleoside_kinase"/>
</dbReference>
<dbReference type="InterPro" id="IPR031314">
    <property type="entry name" value="DNK_dom"/>
</dbReference>
<dbReference type="InterPro" id="IPR027417">
    <property type="entry name" value="P-loop_NTPase"/>
</dbReference>
<dbReference type="PANTHER" id="PTHR10513:SF35">
    <property type="entry name" value="DEOXYADENOSINE KINASE"/>
    <property type="match status" value="1"/>
</dbReference>
<dbReference type="PANTHER" id="PTHR10513">
    <property type="entry name" value="DEOXYNUCLEOSIDE KINASE"/>
    <property type="match status" value="1"/>
</dbReference>
<dbReference type="Pfam" id="PF01712">
    <property type="entry name" value="dNK"/>
    <property type="match status" value="1"/>
</dbReference>
<dbReference type="PIRSF" id="PIRSF000705">
    <property type="entry name" value="DNK"/>
    <property type="match status" value="1"/>
</dbReference>
<dbReference type="SUPFAM" id="SSF52540">
    <property type="entry name" value="P-loop containing nucleoside triphosphate hydrolases"/>
    <property type="match status" value="1"/>
</dbReference>
<reference key="1">
    <citation type="journal article" date="2004" name="Virology">
        <title>Comparative genomic analyses of frog virus 3, type species of the genus Ranavirus (family Iridoviridae).</title>
        <authorList>
            <person name="Tan W.G."/>
            <person name="Barkman T.J."/>
            <person name="Gregory Chinchar V."/>
            <person name="Essani K."/>
        </authorList>
    </citation>
    <scope>NUCLEOTIDE SEQUENCE [LARGE SCALE GENOMIC DNA]</scope>
</reference>
<reference key="2">
    <citation type="journal article" date="2005" name="Arch. Virol.">
        <title>Identification of a Bohle iridovirus thymidine kinase gene and demonstration of activity using vaccinia virus.</title>
        <authorList>
            <person name="Coupar B.E."/>
            <person name="Goldie S.G."/>
            <person name="Hyatt A.D."/>
            <person name="Pallister J.A."/>
        </authorList>
    </citation>
    <scope>NUCLEOTIDE SEQUENCE [GENOMIC DNA]</scope>
    <source>
        <strain>980804</strain>
    </source>
</reference>
<accession>Q6GZP0</accession>
<sequence>MSIPTVIAFSGNIGAGKSTLLRGLEAAGYEVVPEDFSRWGQLFEMALEDPNRWKFSSQLKIMLIQSEIQRAAKKSDNRVVVLERTTECVLDFCNVAMEQGQILPAEHDMLVQIWEKVNVPVDAKIFLNTPPEKCMERIAFRGRAFERDIPVEYLSSLHSKFTRDPDYIMSGLESKEVVLANAIELIEKIVSRNVR</sequence>
<protein>
    <recommendedName>
        <fullName>Putative deoxynucleoside kinase</fullName>
        <ecNumber>2.7.1.-</ecNumber>
    </recommendedName>
</protein>
<gene>
    <name type="ORF">FV3-085R</name>
</gene>
<proteinExistence type="predicted"/>
<keyword id="KW-0418">Kinase</keyword>
<keyword id="KW-1185">Reference proteome</keyword>
<keyword id="KW-0808">Transferase</keyword>